<accession>A0A2K9RG07</accession>
<dbReference type="EC" id="5.5.1.29" evidence="4"/>
<dbReference type="EMBL" id="MG696752">
    <property type="protein sequence ID" value="AUT77124.1"/>
    <property type="molecule type" value="mRNA"/>
</dbReference>
<dbReference type="SMR" id="A0A2K9RG07"/>
<dbReference type="UniPathway" id="UPA00213"/>
<dbReference type="GO" id="GO:0009507">
    <property type="term" value="C:chloroplast"/>
    <property type="evidence" value="ECO:0007669"/>
    <property type="project" value="UniProtKB-SubCell"/>
</dbReference>
<dbReference type="GO" id="GO:0106242">
    <property type="term" value="F:kolavenyl diphosphate synthase activity"/>
    <property type="evidence" value="ECO:0000314"/>
    <property type="project" value="UniProtKB"/>
</dbReference>
<dbReference type="GO" id="GO:0000287">
    <property type="term" value="F:magnesium ion binding"/>
    <property type="evidence" value="ECO:0007669"/>
    <property type="project" value="TreeGrafter"/>
</dbReference>
<dbReference type="GO" id="GO:0010333">
    <property type="term" value="F:terpene synthase activity"/>
    <property type="evidence" value="ECO:0007669"/>
    <property type="project" value="InterPro"/>
</dbReference>
<dbReference type="GO" id="GO:0009686">
    <property type="term" value="P:gibberellin biosynthetic process"/>
    <property type="evidence" value="ECO:0007669"/>
    <property type="project" value="TreeGrafter"/>
</dbReference>
<dbReference type="FunFam" id="1.50.10.130:FF:000002">
    <property type="entry name" value="Ent-copalyl diphosphate synthase, chloroplastic"/>
    <property type="match status" value="1"/>
</dbReference>
<dbReference type="Gene3D" id="1.50.10.160">
    <property type="match status" value="1"/>
</dbReference>
<dbReference type="Gene3D" id="1.10.600.10">
    <property type="entry name" value="Farnesyl Diphosphate Synthase"/>
    <property type="match status" value="1"/>
</dbReference>
<dbReference type="Gene3D" id="1.50.10.130">
    <property type="entry name" value="Terpene synthase, N-terminal domain"/>
    <property type="match status" value="1"/>
</dbReference>
<dbReference type="InterPro" id="IPR008949">
    <property type="entry name" value="Isoprenoid_synthase_dom_sf"/>
</dbReference>
<dbReference type="InterPro" id="IPR001906">
    <property type="entry name" value="Terpene_synth_N"/>
</dbReference>
<dbReference type="InterPro" id="IPR036965">
    <property type="entry name" value="Terpene_synth_N_sf"/>
</dbReference>
<dbReference type="InterPro" id="IPR050148">
    <property type="entry name" value="Terpene_synthase-like"/>
</dbReference>
<dbReference type="InterPro" id="IPR008930">
    <property type="entry name" value="Terpenoid_cyclase/PrenylTrfase"/>
</dbReference>
<dbReference type="PANTHER" id="PTHR31739">
    <property type="entry name" value="ENT-COPALYL DIPHOSPHATE SYNTHASE, CHLOROPLASTIC"/>
    <property type="match status" value="1"/>
</dbReference>
<dbReference type="PANTHER" id="PTHR31739:SF4">
    <property type="entry name" value="ENT-COPALYL DIPHOSPHATE SYNTHASE, CHLOROPLASTIC"/>
    <property type="match status" value="1"/>
</dbReference>
<dbReference type="Pfam" id="PF01397">
    <property type="entry name" value="Terpene_synth"/>
    <property type="match status" value="1"/>
</dbReference>
<dbReference type="SFLD" id="SFLDG01014">
    <property type="entry name" value="Terpene_Cyclase_Like_1_N-term"/>
    <property type="match status" value="1"/>
</dbReference>
<dbReference type="SFLD" id="SFLDG01605">
    <property type="entry name" value="Terpene_Cyclase_Like_1_N-term"/>
    <property type="match status" value="1"/>
</dbReference>
<dbReference type="SUPFAM" id="SSF48239">
    <property type="entry name" value="Terpenoid cyclases/Protein prenyltransferases"/>
    <property type="match status" value="2"/>
</dbReference>
<dbReference type="SUPFAM" id="SSF48576">
    <property type="entry name" value="Terpenoid synthases"/>
    <property type="match status" value="1"/>
</dbReference>
<sequence>MSLAYSQATSLLLSSTTRGGVPSLMHIPATNSPARINTGATPFWKLPFPARPLRQYKSITRARNQVILTAEKSVDVDTEKNTHHQKATAETTRELVERIRWMLQNMDDGELSVSPYDTAWVALVEDIGGSGRPQFPTSLEWISNNQYPDGSWGDRKFLFYDRILNTLACVVALKTWNMHPDKCEKGLKFIKENIHSLENENEEYMPVGFEVAFPSLIETAKKLGIEIPDDSPGMKDIYAKRHLKLKKIPMDLLHKMPTSLLFSLEGMKGLDWQKLLNLRFEGSFLSSPSSTAYALQHTKDELSLQYLLKAIKKFNGGVPNAYPVDMFEHLWSVDRLQRLGISRYFEPEIEECMKYAYRYWTDKGICWARNTNVQDVDDSSMGFRLLRLHSFPVTIDAFKQFEKGGEFCSIPGQSTHAITGMYNIFRASQVLFPGDHILADARKYSAKFLHQKRVNEAIVDKWIITKDLPGEVGYALDVPFYASLPRLEARFFLEHYGGDDDVWIGKTLYRMLYVNCDTYLELAKLDYNVCQAVHQHEWTNIRRWYKDCSVGEFRLAERSLLRAYYIAASTVFEPERSGERLAWAKTAILLETILSQKLHSEEKHTVVDEFKHGSISISGNGRRHQTRISLAETLIYTVNQLSSDIKQAHGRDIHQQLHHAWQKWLTTWEGRGNLGEAEAELLVRTLHLSSGLDESWFSHPKYQQLLEVTSKVCHQLRLFQNRKMHDPKGCTIDLVTGTTFQIEAGMQELVKLVFTKSSEDLDAHTKQSFFAIARSFYYTAYCDPEAIESHVDKVLFDKVV</sequence>
<organism>
    <name type="scientific">Vitex agnus-castus</name>
    <name type="common">Chaste tree</name>
    <dbReference type="NCBI Taxonomy" id="54477"/>
    <lineage>
        <taxon>Eukaryota</taxon>
        <taxon>Viridiplantae</taxon>
        <taxon>Streptophyta</taxon>
        <taxon>Embryophyta</taxon>
        <taxon>Tracheophyta</taxon>
        <taxon>Spermatophyta</taxon>
        <taxon>Magnoliopsida</taxon>
        <taxon>eudicotyledons</taxon>
        <taxon>Gunneridae</taxon>
        <taxon>Pentapetalae</taxon>
        <taxon>asterids</taxon>
        <taxon>lamiids</taxon>
        <taxon>Lamiales</taxon>
        <taxon>Lamiaceae</taxon>
        <taxon>Viticoideae</taxon>
        <taxon>Vitex</taxon>
    </lineage>
</organism>
<name>TPS5_VITAC</name>
<reference key="1">
    <citation type="journal article" date="2018" name="Plant J.">
        <title>Biosynthesis of bioactive diterpenoids in the medicinal plant Vitex agnus-castus.</title>
        <authorList>
            <person name="Heskes A.M."/>
            <person name="Sundram T.C.M."/>
            <person name="Boughton B.A."/>
            <person name="Jensen N.B."/>
            <person name="Hansen N.L."/>
            <person name="Crocoll C."/>
            <person name="Cozzi F."/>
            <person name="Rasmussen S."/>
            <person name="Hamberger B."/>
            <person name="Hamberger B."/>
            <person name="Staerk D."/>
            <person name="Moeller B.L."/>
            <person name="Pateraki I."/>
        </authorList>
    </citation>
    <scope>NUCLEOTIDE SEQUENCE [MRNA]</scope>
    <scope>FUNCTION</scope>
    <scope>CATALYTIC ACTIVITY</scope>
    <scope>PATHWAY</scope>
    <scope>TISSUE SPECIFICITY</scope>
    <source>
        <tissue>Fruit</tissue>
        <tissue>Leaf</tissue>
        <tissue>Trichome gland</tissue>
    </source>
</reference>
<reference key="2">
    <citation type="journal article" date="2003" name="Phytomedicine">
        <title>Chaste tree (Vitex agnus-castus)--pharmacology and clinical indications.</title>
        <authorList>
            <person name="Wuttke W."/>
            <person name="Jarry H."/>
            <person name="Christoffel V."/>
            <person name="Spengler B."/>
            <person name="Seidlova-Wuttke D."/>
        </authorList>
    </citation>
    <scope>REVIEW ON MENSTRUAL CYCLE DISORDERS</scope>
</reference>
<reference key="3">
    <citation type="journal article" date="2019" name="Nat. Prod. Rep.">
        <title>Non-volatile natural products in plant glandular trichomes: chemistry, biological activities and biosynthesis.</title>
        <authorList>
            <person name="Liu Y."/>
            <person name="Jing S.-X."/>
            <person name="Luo S.-H."/>
            <person name="Li S.-H."/>
        </authorList>
    </citation>
    <scope>PATHWAY</scope>
    <scope>REVIEW</scope>
</reference>
<gene>
    <name evidence="5" type="primary">TPS5</name>
</gene>
<evidence type="ECO:0000250" key="1">
    <source>
        <dbReference type="UniProtKB" id="C7BKP9"/>
    </source>
</evidence>
<evidence type="ECO:0000250" key="2">
    <source>
        <dbReference type="UniProtKB" id="Q38802"/>
    </source>
</evidence>
<evidence type="ECO:0000255" key="3"/>
<evidence type="ECO:0000269" key="4">
    <source>
    </source>
</evidence>
<evidence type="ECO:0000303" key="5">
    <source>
    </source>
</evidence>
<evidence type="ECO:0000305" key="6"/>
<evidence type="ECO:0000305" key="7">
    <source>
    </source>
</evidence>
<evidence type="ECO:0000305" key="8">
    <source>
    </source>
</evidence>
<evidence type="ECO:0000305" key="9">
    <source>
    </source>
</evidence>
<protein>
    <recommendedName>
        <fullName evidence="5">Kolavenyl diphosphate synthase TPS5, chloroplastic</fullName>
        <ecNumber evidence="4">5.5.1.29</ecNumber>
    </recommendedName>
    <alternativeName>
        <fullName evidence="5">Terpene synthase 5</fullName>
        <shortName evidence="5">VacTPS5</shortName>
    </alternativeName>
</protein>
<proteinExistence type="evidence at protein level"/>
<keyword id="KW-0150">Chloroplast</keyword>
<keyword id="KW-0413">Isomerase</keyword>
<keyword id="KW-0460">Magnesium</keyword>
<keyword id="KW-0479">Metal-binding</keyword>
<keyword id="KW-0934">Plastid</keyword>
<keyword id="KW-0809">Transit peptide</keyword>
<comment type="function">
    <text evidence="4 7 8 9">Involved in the biosynthesis of labdane-type diterpenoid including cleroda-dienols, and peregrinol lactones and furan derivatives, dopaminergic diterpenoids that can bind to dopamine receptors in the human pituitary gland, have probably ability to lower prolactin levels, and are used to treat menstrual cycle disorders (e.g. premenstrual syndrome and mastodynia) (Probable). Terpene synthase that produces kolavenyl diphosphate from geranylgeranyl diphosphate (GGPP) (PubMed:29315936).</text>
</comment>
<comment type="catalytic activity">
    <reaction evidence="4">
        <text>(2E,6E,10E)-geranylgeranyl diphosphate = (+)-kolavenyl diphosphate</text>
        <dbReference type="Rhea" id="RHEA:54676"/>
        <dbReference type="ChEBI" id="CHEBI:58756"/>
        <dbReference type="ChEBI" id="CHEBI:138311"/>
        <dbReference type="EC" id="5.5.1.29"/>
    </reaction>
    <physiologicalReaction direction="left-to-right" evidence="4">
        <dbReference type="Rhea" id="RHEA:54677"/>
    </physiologicalReaction>
</comment>
<comment type="cofactor">
    <cofactor evidence="2">
        <name>Mg(2+)</name>
        <dbReference type="ChEBI" id="CHEBI:18420"/>
    </cofactor>
</comment>
<comment type="pathway">
    <text evidence="8 9">Secondary metabolite biosynthesis; terpenoid biosynthesis.</text>
</comment>
<comment type="subcellular location">
    <subcellularLocation>
        <location evidence="3">Plastid</location>
        <location evidence="3">Chloroplast</location>
    </subcellularLocation>
</comment>
<comment type="tissue specificity">
    <text evidence="4">Mostly expressed in trichomes of leaves and fruits.</text>
</comment>
<comment type="domain">
    <text evidence="6">The Asp-Xaa-Asp-Asp (DXDD) motif is important for the catalytic activity, presumably through binding to Mg(2+).</text>
</comment>
<comment type="similarity">
    <text evidence="6">Belongs to the terpene synthase family.</text>
</comment>
<feature type="transit peptide" description="Chloroplast" evidence="3">
    <location>
        <begin position="1"/>
        <end position="75"/>
    </location>
</feature>
<feature type="chain" id="PRO_0000449311" description="Kolavenyl diphosphate synthase TPS5, chloroplastic">
    <location>
        <begin position="76"/>
        <end position="800"/>
    </location>
</feature>
<feature type="short sequence motif" description="DXDD motif" evidence="6">
    <location>
        <begin position="375"/>
        <end position="378"/>
    </location>
</feature>
<feature type="binding site" evidence="2">
    <location>
        <position position="244"/>
    </location>
    <ligand>
        <name>substrate</name>
    </ligand>
</feature>
<feature type="binding site" evidence="1">
    <location>
        <position position="375"/>
    </location>
    <ligand>
        <name>Mg(2+)</name>
        <dbReference type="ChEBI" id="CHEBI:18420"/>
    </ligand>
</feature>
<feature type="binding site" evidence="1">
    <location>
        <position position="377"/>
    </location>
    <ligand>
        <name>Mg(2+)</name>
        <dbReference type="ChEBI" id="CHEBI:18420"/>
    </ligand>
</feature>
<feature type="binding site" evidence="2">
    <location>
        <position position="461"/>
    </location>
    <ligand>
        <name>substrate</name>
    </ligand>
</feature>